<dbReference type="EMBL" id="CP001215">
    <property type="protein sequence ID" value="ACP16869.1"/>
    <property type="molecule type" value="Genomic_DNA"/>
</dbReference>
<dbReference type="RefSeq" id="WP_000526077.1">
    <property type="nucleotide sequence ID" value="NC_012581.1"/>
</dbReference>
<dbReference type="SMR" id="C3LFR2"/>
<dbReference type="KEGG" id="bah:BAMEG_5677"/>
<dbReference type="HOGENOM" id="CLU_163820_1_0_9"/>
<dbReference type="HAMAP" id="MF_01863">
    <property type="entry name" value="UPF0741"/>
    <property type="match status" value="1"/>
</dbReference>
<dbReference type="InterPro" id="IPR009910">
    <property type="entry name" value="DUF1450"/>
</dbReference>
<dbReference type="InterPro" id="IPR020880">
    <property type="entry name" value="UPF0741"/>
</dbReference>
<dbReference type="Pfam" id="PF07293">
    <property type="entry name" value="DUF1450"/>
    <property type="match status" value="1"/>
</dbReference>
<feature type="chain" id="PRO_1000188711" description="UPF0741 protein BAMEG_5677">
    <location>
        <begin position="1"/>
        <end position="74"/>
    </location>
</feature>
<gene>
    <name type="ordered locus">BAMEG_5677</name>
</gene>
<evidence type="ECO:0000255" key="1">
    <source>
        <dbReference type="HAMAP-Rule" id="MF_01863"/>
    </source>
</evidence>
<name>Y5677_BACAC</name>
<organism>
    <name type="scientific">Bacillus anthracis (strain CDC 684 / NRRL 3495)</name>
    <dbReference type="NCBI Taxonomy" id="568206"/>
    <lineage>
        <taxon>Bacteria</taxon>
        <taxon>Bacillati</taxon>
        <taxon>Bacillota</taxon>
        <taxon>Bacilli</taxon>
        <taxon>Bacillales</taxon>
        <taxon>Bacillaceae</taxon>
        <taxon>Bacillus</taxon>
        <taxon>Bacillus cereus group</taxon>
    </lineage>
</organism>
<proteinExistence type="inferred from homology"/>
<protein>
    <recommendedName>
        <fullName evidence="1">UPF0741 protein BAMEG_5677</fullName>
    </recommendedName>
</protein>
<reference key="1">
    <citation type="submission" date="2008-10" db="EMBL/GenBank/DDBJ databases">
        <title>Genome sequence of Bacillus anthracis str. CDC 684.</title>
        <authorList>
            <person name="Dodson R.J."/>
            <person name="Munk A.C."/>
            <person name="Brettin T."/>
            <person name="Bruce D."/>
            <person name="Detter C."/>
            <person name="Tapia R."/>
            <person name="Han C."/>
            <person name="Sutton G."/>
            <person name="Sims D."/>
        </authorList>
    </citation>
    <scope>NUCLEOTIDE SEQUENCE [LARGE SCALE GENOMIC DNA]</scope>
    <source>
        <strain>CDC 684 / NRRL 3495</strain>
    </source>
</reference>
<sequence length="74" mass="8132">MGNEFRVCDDCQATNVKTLIPKLKKVDSCATIEVGCQSYCGPGRKKSFAFVNNRPVAAPTEDELIVKIEAKLNK</sequence>
<accession>C3LFR2</accession>
<comment type="similarity">
    <text evidence="1">Belongs to the UPF0741 family.</text>
</comment>